<feature type="chain" id="PRO_0000319714" description="Phosphoribosyl-AMP cyclohydrolase">
    <location>
        <begin position="1"/>
        <end position="128"/>
    </location>
</feature>
<feature type="binding site" evidence="1">
    <location>
        <position position="86"/>
    </location>
    <ligand>
        <name>Mg(2+)</name>
        <dbReference type="ChEBI" id="CHEBI:18420"/>
    </ligand>
</feature>
<feature type="binding site" evidence="1">
    <location>
        <position position="87"/>
    </location>
    <ligand>
        <name>Zn(2+)</name>
        <dbReference type="ChEBI" id="CHEBI:29105"/>
        <note>ligand shared between dimeric partners</note>
    </ligand>
</feature>
<feature type="binding site" evidence="1">
    <location>
        <position position="88"/>
    </location>
    <ligand>
        <name>Mg(2+)</name>
        <dbReference type="ChEBI" id="CHEBI:18420"/>
    </ligand>
</feature>
<feature type="binding site" evidence="1">
    <location>
        <position position="90"/>
    </location>
    <ligand>
        <name>Mg(2+)</name>
        <dbReference type="ChEBI" id="CHEBI:18420"/>
    </ligand>
</feature>
<feature type="binding site" evidence="1">
    <location>
        <position position="103"/>
    </location>
    <ligand>
        <name>Zn(2+)</name>
        <dbReference type="ChEBI" id="CHEBI:29105"/>
        <note>ligand shared between dimeric partners</note>
    </ligand>
</feature>
<feature type="binding site" evidence="1">
    <location>
        <position position="110"/>
    </location>
    <ligand>
        <name>Zn(2+)</name>
        <dbReference type="ChEBI" id="CHEBI:29105"/>
        <note>ligand shared between dimeric partners</note>
    </ligand>
</feature>
<accession>Q166D6</accession>
<organism>
    <name type="scientific">Roseobacter denitrificans (strain ATCC 33942 / OCh 114)</name>
    <name type="common">Erythrobacter sp. (strain OCh 114)</name>
    <name type="synonym">Roseobacter denitrificans</name>
    <dbReference type="NCBI Taxonomy" id="375451"/>
    <lineage>
        <taxon>Bacteria</taxon>
        <taxon>Pseudomonadati</taxon>
        <taxon>Pseudomonadota</taxon>
        <taxon>Alphaproteobacteria</taxon>
        <taxon>Rhodobacterales</taxon>
        <taxon>Roseobacteraceae</taxon>
        <taxon>Roseobacter</taxon>
    </lineage>
</organism>
<sequence>MSDAANDTKVRFDPERLTFNEAGLVPAIAQDAETSEVLMLAWMNAESIARTLRTGRVTYWSRSRQAFWVKGETSGHVQELVDLRIDCDRDCLLVLLRQTGPACHTGRRSCFYTGVRDGHEQELMTPQD</sequence>
<dbReference type="EC" id="3.5.4.19" evidence="1"/>
<dbReference type="EMBL" id="CP000362">
    <property type="protein sequence ID" value="ABG32157.1"/>
    <property type="molecule type" value="Genomic_DNA"/>
</dbReference>
<dbReference type="RefSeq" id="WP_011568774.1">
    <property type="nucleotide sequence ID" value="NC_008209.1"/>
</dbReference>
<dbReference type="SMR" id="Q166D6"/>
<dbReference type="STRING" id="375451.RD1_2607"/>
<dbReference type="KEGG" id="rde:RD1_2607"/>
<dbReference type="eggNOG" id="COG0139">
    <property type="taxonomic scope" value="Bacteria"/>
</dbReference>
<dbReference type="HOGENOM" id="CLU_048577_5_3_5"/>
<dbReference type="OrthoDB" id="9795769at2"/>
<dbReference type="UniPathway" id="UPA00031">
    <property type="reaction ID" value="UER00008"/>
</dbReference>
<dbReference type="Proteomes" id="UP000007029">
    <property type="component" value="Chromosome"/>
</dbReference>
<dbReference type="GO" id="GO:0005737">
    <property type="term" value="C:cytoplasm"/>
    <property type="evidence" value="ECO:0007669"/>
    <property type="project" value="UniProtKB-SubCell"/>
</dbReference>
<dbReference type="GO" id="GO:0000287">
    <property type="term" value="F:magnesium ion binding"/>
    <property type="evidence" value="ECO:0007669"/>
    <property type="project" value="UniProtKB-UniRule"/>
</dbReference>
<dbReference type="GO" id="GO:0004635">
    <property type="term" value="F:phosphoribosyl-AMP cyclohydrolase activity"/>
    <property type="evidence" value="ECO:0007669"/>
    <property type="project" value="UniProtKB-UniRule"/>
</dbReference>
<dbReference type="GO" id="GO:0008270">
    <property type="term" value="F:zinc ion binding"/>
    <property type="evidence" value="ECO:0007669"/>
    <property type="project" value="UniProtKB-UniRule"/>
</dbReference>
<dbReference type="GO" id="GO:0000105">
    <property type="term" value="P:L-histidine biosynthetic process"/>
    <property type="evidence" value="ECO:0007669"/>
    <property type="project" value="UniProtKB-UniRule"/>
</dbReference>
<dbReference type="FunFam" id="3.10.20.810:FF:000001">
    <property type="entry name" value="Histidine biosynthesis bifunctional protein HisIE"/>
    <property type="match status" value="1"/>
</dbReference>
<dbReference type="Gene3D" id="3.10.20.810">
    <property type="entry name" value="Phosphoribosyl-AMP cyclohydrolase"/>
    <property type="match status" value="1"/>
</dbReference>
<dbReference type="HAMAP" id="MF_01021">
    <property type="entry name" value="HisI"/>
    <property type="match status" value="1"/>
</dbReference>
<dbReference type="InterPro" id="IPR026660">
    <property type="entry name" value="PRA-CH"/>
</dbReference>
<dbReference type="InterPro" id="IPR002496">
    <property type="entry name" value="PRib_AMP_CycHydrolase_dom"/>
</dbReference>
<dbReference type="InterPro" id="IPR038019">
    <property type="entry name" value="PRib_AMP_CycHydrolase_sf"/>
</dbReference>
<dbReference type="NCBIfam" id="NF000768">
    <property type="entry name" value="PRK00051.1"/>
    <property type="match status" value="1"/>
</dbReference>
<dbReference type="PANTHER" id="PTHR42945">
    <property type="entry name" value="HISTIDINE BIOSYNTHESIS BIFUNCTIONAL PROTEIN"/>
    <property type="match status" value="1"/>
</dbReference>
<dbReference type="PANTHER" id="PTHR42945:SF1">
    <property type="entry name" value="HISTIDINE BIOSYNTHESIS BIFUNCTIONAL PROTEIN HIS7"/>
    <property type="match status" value="1"/>
</dbReference>
<dbReference type="Pfam" id="PF01502">
    <property type="entry name" value="PRA-CH"/>
    <property type="match status" value="1"/>
</dbReference>
<dbReference type="SUPFAM" id="SSF141734">
    <property type="entry name" value="HisI-like"/>
    <property type="match status" value="1"/>
</dbReference>
<comment type="function">
    <text evidence="1">Catalyzes the hydrolysis of the adenine ring of phosphoribosyl-AMP.</text>
</comment>
<comment type="catalytic activity">
    <reaction evidence="1">
        <text>1-(5-phospho-beta-D-ribosyl)-5'-AMP + H2O = 1-(5-phospho-beta-D-ribosyl)-5-[(5-phospho-beta-D-ribosylamino)methylideneamino]imidazole-4-carboxamide</text>
        <dbReference type="Rhea" id="RHEA:20049"/>
        <dbReference type="ChEBI" id="CHEBI:15377"/>
        <dbReference type="ChEBI" id="CHEBI:58435"/>
        <dbReference type="ChEBI" id="CHEBI:59457"/>
        <dbReference type="EC" id="3.5.4.19"/>
    </reaction>
</comment>
<comment type="cofactor">
    <cofactor evidence="1">
        <name>Mg(2+)</name>
        <dbReference type="ChEBI" id="CHEBI:18420"/>
    </cofactor>
    <text evidence="1">Binds 1 Mg(2+) ion per subunit.</text>
</comment>
<comment type="cofactor">
    <cofactor evidence="1">
        <name>Zn(2+)</name>
        <dbReference type="ChEBI" id="CHEBI:29105"/>
    </cofactor>
    <text evidence="1">Binds 1 zinc ion per subunit.</text>
</comment>
<comment type="pathway">
    <text evidence="1">Amino-acid biosynthesis; L-histidine biosynthesis; L-histidine from 5-phospho-alpha-D-ribose 1-diphosphate: step 3/9.</text>
</comment>
<comment type="subunit">
    <text evidence="1">Homodimer.</text>
</comment>
<comment type="subcellular location">
    <subcellularLocation>
        <location evidence="1">Cytoplasm</location>
    </subcellularLocation>
</comment>
<comment type="similarity">
    <text evidence="1">Belongs to the PRA-CH family.</text>
</comment>
<evidence type="ECO:0000255" key="1">
    <source>
        <dbReference type="HAMAP-Rule" id="MF_01021"/>
    </source>
</evidence>
<protein>
    <recommendedName>
        <fullName evidence="1">Phosphoribosyl-AMP cyclohydrolase</fullName>
        <shortName evidence="1">PRA-CH</shortName>
        <ecNumber evidence="1">3.5.4.19</ecNumber>
    </recommendedName>
</protein>
<reference key="1">
    <citation type="journal article" date="2007" name="J. Bacteriol.">
        <title>The complete genome sequence of Roseobacter denitrificans reveals a mixotrophic rather than photosynthetic metabolism.</title>
        <authorList>
            <person name="Swingley W.D."/>
            <person name="Sadekar S."/>
            <person name="Mastrian S.D."/>
            <person name="Matthies H.J."/>
            <person name="Hao J."/>
            <person name="Ramos H."/>
            <person name="Acharya C.R."/>
            <person name="Conrad A.L."/>
            <person name="Taylor H.L."/>
            <person name="Dejesa L.C."/>
            <person name="Shah M.K."/>
            <person name="O'Huallachain M.E."/>
            <person name="Lince M.T."/>
            <person name="Blankenship R.E."/>
            <person name="Beatty J.T."/>
            <person name="Touchman J.W."/>
        </authorList>
    </citation>
    <scope>NUCLEOTIDE SEQUENCE [LARGE SCALE GENOMIC DNA]</scope>
    <source>
        <strain>ATCC 33942 / OCh 114</strain>
    </source>
</reference>
<proteinExistence type="inferred from homology"/>
<gene>
    <name evidence="1" type="primary">hisI</name>
    <name type="ordered locus">RD1_2607</name>
</gene>
<keyword id="KW-0028">Amino-acid biosynthesis</keyword>
<keyword id="KW-0963">Cytoplasm</keyword>
<keyword id="KW-0368">Histidine biosynthesis</keyword>
<keyword id="KW-0378">Hydrolase</keyword>
<keyword id="KW-0460">Magnesium</keyword>
<keyword id="KW-0479">Metal-binding</keyword>
<keyword id="KW-1185">Reference proteome</keyword>
<keyword id="KW-0862">Zinc</keyword>
<name>HIS3_ROSDO</name>